<name>KPR1_SCHPO</name>
<organism>
    <name type="scientific">Schizosaccharomyces pombe (strain 972 / ATCC 24843)</name>
    <name type="common">Fission yeast</name>
    <dbReference type="NCBI Taxonomy" id="284812"/>
    <lineage>
        <taxon>Eukaryota</taxon>
        <taxon>Fungi</taxon>
        <taxon>Dikarya</taxon>
        <taxon>Ascomycota</taxon>
        <taxon>Taphrinomycotina</taxon>
        <taxon>Schizosaccharomycetes</taxon>
        <taxon>Schizosaccharomycetales</taxon>
        <taxon>Schizosaccharomycetaceae</taxon>
        <taxon>Schizosaccharomyces</taxon>
    </lineage>
</organism>
<protein>
    <recommendedName>
        <fullName>Ribose-phosphate pyrophosphokinase 1</fullName>
        <ecNumber>2.7.6.1</ecNumber>
    </recommendedName>
    <alternativeName>
        <fullName>Phosphoribosyl pyrophosphate synthase 1</fullName>
    </alternativeName>
</protein>
<sequence>MKSATIIGGGSHPELLHLISNRLGITPCDVSLKRFANGETSVEIRESVRDKDVFILQSGSSTVNDSLMELLIIISACKGGSAKRITAVMPYFPYSKQSKMRKYRDAITARMVANLLTVAGVDHIITLDLHASQMQGFFTRPVDNLYAEPNIAEWIRRNVDDWEEAVVVSKNPGGAKRVTSLADTLNLDFALINTDRQRSSHFSQNFEDSIMDETEATETHVTNCSVYLDRPRIHTAKYLLGHIIDDEEIITTPASVCSEDYAQEVNLYSQGGCPSDDDEEENIMSASIYAERMITLVGDVNGKTALLIDDTIENPTAFIVASEHLVKRCGAKRVIVIGTHGIFQNKCLKDLQSCEYIEQIVVTNTYPIKPQAVLECDKLTVIDISGVLAEAIRRTHNGESISFLFKKAF</sequence>
<reference key="1">
    <citation type="submission" date="1995-01" db="EMBL/GenBank/DDBJ databases">
        <authorList>
            <person name="Hilti N."/>
        </authorList>
    </citation>
    <scope>NUCLEOTIDE SEQUENCE [GENOMIC DNA]</scope>
    <source>
        <strain>972 / ATCC 24843</strain>
    </source>
</reference>
<reference key="2">
    <citation type="journal article" date="2002" name="Nature">
        <title>The genome sequence of Schizosaccharomyces pombe.</title>
        <authorList>
            <person name="Wood V."/>
            <person name="Gwilliam R."/>
            <person name="Rajandream M.A."/>
            <person name="Lyne M.H."/>
            <person name="Lyne R."/>
            <person name="Stewart A."/>
            <person name="Sgouros J.G."/>
            <person name="Peat N."/>
            <person name="Hayles J."/>
            <person name="Baker S.G."/>
            <person name="Basham D."/>
            <person name="Bowman S."/>
            <person name="Brooks K."/>
            <person name="Brown D."/>
            <person name="Brown S."/>
            <person name="Chillingworth T."/>
            <person name="Churcher C.M."/>
            <person name="Collins M."/>
            <person name="Connor R."/>
            <person name="Cronin A."/>
            <person name="Davis P."/>
            <person name="Feltwell T."/>
            <person name="Fraser A."/>
            <person name="Gentles S."/>
            <person name="Goble A."/>
            <person name="Hamlin N."/>
            <person name="Harris D.E."/>
            <person name="Hidalgo J."/>
            <person name="Hodgson G."/>
            <person name="Holroyd S."/>
            <person name="Hornsby T."/>
            <person name="Howarth S."/>
            <person name="Huckle E.J."/>
            <person name="Hunt S."/>
            <person name="Jagels K."/>
            <person name="James K.D."/>
            <person name="Jones L."/>
            <person name="Jones M."/>
            <person name="Leather S."/>
            <person name="McDonald S."/>
            <person name="McLean J."/>
            <person name="Mooney P."/>
            <person name="Moule S."/>
            <person name="Mungall K.L."/>
            <person name="Murphy L.D."/>
            <person name="Niblett D."/>
            <person name="Odell C."/>
            <person name="Oliver K."/>
            <person name="O'Neil S."/>
            <person name="Pearson D."/>
            <person name="Quail M.A."/>
            <person name="Rabbinowitsch E."/>
            <person name="Rutherford K.M."/>
            <person name="Rutter S."/>
            <person name="Saunders D."/>
            <person name="Seeger K."/>
            <person name="Sharp S."/>
            <person name="Skelton J."/>
            <person name="Simmonds M.N."/>
            <person name="Squares R."/>
            <person name="Squares S."/>
            <person name="Stevens K."/>
            <person name="Taylor K."/>
            <person name="Taylor R.G."/>
            <person name="Tivey A."/>
            <person name="Walsh S.V."/>
            <person name="Warren T."/>
            <person name="Whitehead S."/>
            <person name="Woodward J.R."/>
            <person name="Volckaert G."/>
            <person name="Aert R."/>
            <person name="Robben J."/>
            <person name="Grymonprez B."/>
            <person name="Weltjens I."/>
            <person name="Vanstreels E."/>
            <person name="Rieger M."/>
            <person name="Schaefer M."/>
            <person name="Mueller-Auer S."/>
            <person name="Gabel C."/>
            <person name="Fuchs M."/>
            <person name="Duesterhoeft A."/>
            <person name="Fritzc C."/>
            <person name="Holzer E."/>
            <person name="Moestl D."/>
            <person name="Hilbert H."/>
            <person name="Borzym K."/>
            <person name="Langer I."/>
            <person name="Beck A."/>
            <person name="Lehrach H."/>
            <person name="Reinhardt R."/>
            <person name="Pohl T.M."/>
            <person name="Eger P."/>
            <person name="Zimmermann W."/>
            <person name="Wedler H."/>
            <person name="Wambutt R."/>
            <person name="Purnelle B."/>
            <person name="Goffeau A."/>
            <person name="Cadieu E."/>
            <person name="Dreano S."/>
            <person name="Gloux S."/>
            <person name="Lelaure V."/>
            <person name="Mottier S."/>
            <person name="Galibert F."/>
            <person name="Aves S.J."/>
            <person name="Xiang Z."/>
            <person name="Hunt C."/>
            <person name="Moore K."/>
            <person name="Hurst S.M."/>
            <person name="Lucas M."/>
            <person name="Rochet M."/>
            <person name="Gaillardin C."/>
            <person name="Tallada V.A."/>
            <person name="Garzon A."/>
            <person name="Thode G."/>
            <person name="Daga R.R."/>
            <person name="Cruzado L."/>
            <person name="Jimenez J."/>
            <person name="Sanchez M."/>
            <person name="del Rey F."/>
            <person name="Benito J."/>
            <person name="Dominguez A."/>
            <person name="Revuelta J.L."/>
            <person name="Moreno S."/>
            <person name="Armstrong J."/>
            <person name="Forsburg S.L."/>
            <person name="Cerutti L."/>
            <person name="Lowe T."/>
            <person name="McCombie W.R."/>
            <person name="Paulsen I."/>
            <person name="Potashkin J."/>
            <person name="Shpakovski G.V."/>
            <person name="Ussery D."/>
            <person name="Barrell B.G."/>
            <person name="Nurse P."/>
        </authorList>
    </citation>
    <scope>NUCLEOTIDE SEQUENCE [LARGE SCALE GENOMIC DNA]</scope>
    <source>
        <strain>972 / ATCC 24843</strain>
    </source>
</reference>
<reference key="3">
    <citation type="journal article" date="2006" name="Nat. Biotechnol.">
        <title>ORFeome cloning and global analysis of protein localization in the fission yeast Schizosaccharomyces pombe.</title>
        <authorList>
            <person name="Matsuyama A."/>
            <person name="Arai R."/>
            <person name="Yashiroda Y."/>
            <person name="Shirai A."/>
            <person name="Kamata A."/>
            <person name="Sekido S."/>
            <person name="Kobayashi Y."/>
            <person name="Hashimoto A."/>
            <person name="Hamamoto M."/>
            <person name="Hiraoka Y."/>
            <person name="Horinouchi S."/>
            <person name="Yoshida M."/>
        </authorList>
    </citation>
    <scope>SUBCELLULAR LOCATION [LARGE SCALE ANALYSIS]</scope>
</reference>
<feature type="chain" id="PRO_0000141091" description="Ribose-phosphate pyrophosphokinase 1">
    <location>
        <begin position="1"/>
        <end position="409"/>
    </location>
</feature>
<feature type="binding site" evidence="2">
    <location>
        <position position="128"/>
    </location>
    <ligand>
        <name>Mg(2+)</name>
        <dbReference type="ChEBI" id="CHEBI:18420"/>
    </ligand>
</feature>
<feature type="binding site" evidence="2">
    <location>
        <position position="130"/>
    </location>
    <ligand>
        <name>Mg(2+)</name>
        <dbReference type="ChEBI" id="CHEBI:18420"/>
    </ligand>
</feature>
<feature type="binding site" evidence="2">
    <location>
        <position position="143"/>
    </location>
    <ligand>
        <name>Mg(2+)</name>
        <dbReference type="ChEBI" id="CHEBI:18420"/>
    </ligand>
</feature>
<feature type="modified residue" description="Phosphoserine" evidence="1">
    <location>
        <position position="199"/>
    </location>
</feature>
<comment type="function">
    <text evidence="1">5-phosphoribose 1-diphosphate synthase involved in nucleotide, histidine, and tryptophan biosynthesis. Active in heteromultimeric complexes with other 5-phosphoribose 1-diphosphate synthases (By similarity).</text>
</comment>
<comment type="catalytic activity">
    <reaction>
        <text>D-ribose 5-phosphate + ATP = 5-phospho-alpha-D-ribose 1-diphosphate + AMP + H(+)</text>
        <dbReference type="Rhea" id="RHEA:15609"/>
        <dbReference type="ChEBI" id="CHEBI:15378"/>
        <dbReference type="ChEBI" id="CHEBI:30616"/>
        <dbReference type="ChEBI" id="CHEBI:58017"/>
        <dbReference type="ChEBI" id="CHEBI:78346"/>
        <dbReference type="ChEBI" id="CHEBI:456215"/>
        <dbReference type="EC" id="2.7.6.1"/>
    </reaction>
</comment>
<comment type="pathway">
    <text>Metabolic intermediate biosynthesis; 5-phospho-alpha-D-ribose 1-diphosphate biosynthesis; 5-phospho-alpha-D-ribose 1-diphosphate from D-ribose 5-phosphate (route I): step 1/1.</text>
</comment>
<comment type="subcellular location">
    <subcellularLocation>
        <location evidence="3">Cytoplasm</location>
    </subcellularLocation>
</comment>
<comment type="similarity">
    <text evidence="4">Belongs to the ribose-phosphate pyrophosphokinase family.</text>
</comment>
<proteinExistence type="inferred from homology"/>
<dbReference type="EC" id="2.7.6.1"/>
<dbReference type="EMBL" id="X83866">
    <property type="protein sequence ID" value="CAA58747.1"/>
    <property type="molecule type" value="Genomic_DNA"/>
</dbReference>
<dbReference type="EMBL" id="CU329670">
    <property type="protein sequence ID" value="CAB11484.1"/>
    <property type="molecule type" value="Genomic_DNA"/>
</dbReference>
<dbReference type="PIR" id="S51326">
    <property type="entry name" value="S51326"/>
</dbReference>
<dbReference type="RefSeq" id="NP_593826.1">
    <property type="nucleotide sequence ID" value="NM_001019255.2"/>
</dbReference>
<dbReference type="SMR" id="P41831"/>
<dbReference type="BioGRID" id="279943">
    <property type="interactions" value="29"/>
</dbReference>
<dbReference type="FunCoup" id="P41831">
    <property type="interactions" value="204"/>
</dbReference>
<dbReference type="STRING" id="284812.P41831"/>
<dbReference type="iPTMnet" id="P41831"/>
<dbReference type="PaxDb" id="4896-SPAC4A8.14.1"/>
<dbReference type="EnsemblFungi" id="SPAC4A8.14.1">
    <property type="protein sequence ID" value="SPAC4A8.14.1:pep"/>
    <property type="gene ID" value="SPAC4A8.14"/>
</dbReference>
<dbReference type="KEGG" id="spo:2543525"/>
<dbReference type="PomBase" id="SPAC4A8.14"/>
<dbReference type="VEuPathDB" id="FungiDB:SPAC4A8.14"/>
<dbReference type="eggNOG" id="KOG1448">
    <property type="taxonomic scope" value="Eukaryota"/>
</dbReference>
<dbReference type="HOGENOM" id="CLU_033546_1_0_1"/>
<dbReference type="InParanoid" id="P41831"/>
<dbReference type="OMA" id="CKMKKHR"/>
<dbReference type="PhylomeDB" id="P41831"/>
<dbReference type="Reactome" id="R-SPO-73843">
    <property type="pathway name" value="5-Phosphoribose 1-diphosphate biosynthesis"/>
</dbReference>
<dbReference type="UniPathway" id="UPA00087">
    <property type="reaction ID" value="UER00172"/>
</dbReference>
<dbReference type="PRO" id="PR:P41831"/>
<dbReference type="Proteomes" id="UP000002485">
    <property type="component" value="Chromosome I"/>
</dbReference>
<dbReference type="GO" id="GO:0005737">
    <property type="term" value="C:cytoplasm"/>
    <property type="evidence" value="ECO:0000318"/>
    <property type="project" value="GO_Central"/>
</dbReference>
<dbReference type="GO" id="GO:0005829">
    <property type="term" value="C:cytosol"/>
    <property type="evidence" value="ECO:0007005"/>
    <property type="project" value="PomBase"/>
</dbReference>
<dbReference type="GO" id="GO:0005634">
    <property type="term" value="C:nucleus"/>
    <property type="evidence" value="ECO:0007005"/>
    <property type="project" value="PomBase"/>
</dbReference>
<dbReference type="GO" id="GO:0002189">
    <property type="term" value="C:ribose phosphate diphosphokinase complex"/>
    <property type="evidence" value="ECO:0000318"/>
    <property type="project" value="GO_Central"/>
</dbReference>
<dbReference type="GO" id="GO:0005524">
    <property type="term" value="F:ATP binding"/>
    <property type="evidence" value="ECO:0007669"/>
    <property type="project" value="UniProtKB-KW"/>
</dbReference>
<dbReference type="GO" id="GO:0016301">
    <property type="term" value="F:kinase activity"/>
    <property type="evidence" value="ECO:0007669"/>
    <property type="project" value="UniProtKB-KW"/>
</dbReference>
<dbReference type="GO" id="GO:0000287">
    <property type="term" value="F:magnesium ion binding"/>
    <property type="evidence" value="ECO:0007669"/>
    <property type="project" value="InterPro"/>
</dbReference>
<dbReference type="GO" id="GO:0004749">
    <property type="term" value="F:ribose phosphate diphosphokinase activity"/>
    <property type="evidence" value="ECO:0000318"/>
    <property type="project" value="GO_Central"/>
</dbReference>
<dbReference type="GO" id="GO:0006015">
    <property type="term" value="P:5-phosphoribose 1-diphosphate biosynthetic process"/>
    <property type="evidence" value="ECO:0000318"/>
    <property type="project" value="GO_Central"/>
</dbReference>
<dbReference type="GO" id="GO:0006164">
    <property type="term" value="P:purine nucleotide biosynthetic process"/>
    <property type="evidence" value="ECO:0000318"/>
    <property type="project" value="GO_Central"/>
</dbReference>
<dbReference type="GO" id="GO:0009156">
    <property type="term" value="P:ribonucleoside monophosphate biosynthetic process"/>
    <property type="evidence" value="ECO:0007669"/>
    <property type="project" value="InterPro"/>
</dbReference>
<dbReference type="CDD" id="cd06223">
    <property type="entry name" value="PRTases_typeI"/>
    <property type="match status" value="2"/>
</dbReference>
<dbReference type="FunFam" id="3.40.50.2020:FF:000017">
    <property type="entry name" value="Ribose-phosphate pyrophosphokinase 1"/>
    <property type="match status" value="1"/>
</dbReference>
<dbReference type="FunFam" id="3.40.50.2020:FF:000043">
    <property type="entry name" value="Ribose-phosphate pyrophosphokinase 1"/>
    <property type="match status" value="1"/>
</dbReference>
<dbReference type="Gene3D" id="3.40.50.2020">
    <property type="match status" value="2"/>
</dbReference>
<dbReference type="InterPro" id="IPR000842">
    <property type="entry name" value="PRib_PP_synth_CS"/>
</dbReference>
<dbReference type="InterPro" id="IPR029099">
    <property type="entry name" value="Pribosyltran_N"/>
</dbReference>
<dbReference type="InterPro" id="IPR000836">
    <property type="entry name" value="PRibTrfase_dom"/>
</dbReference>
<dbReference type="InterPro" id="IPR029057">
    <property type="entry name" value="PRTase-like"/>
</dbReference>
<dbReference type="InterPro" id="IPR005946">
    <property type="entry name" value="Rib-P_diPkinase"/>
</dbReference>
<dbReference type="NCBIfam" id="TIGR01251">
    <property type="entry name" value="ribP_PPkin"/>
    <property type="match status" value="1"/>
</dbReference>
<dbReference type="PANTHER" id="PTHR10210:SF57">
    <property type="entry name" value="RIBOSE-PHOSPHATE DIPHOSPHOKINASE"/>
    <property type="match status" value="1"/>
</dbReference>
<dbReference type="PANTHER" id="PTHR10210">
    <property type="entry name" value="RIBOSE-PHOSPHATE DIPHOSPHOKINASE FAMILY MEMBER"/>
    <property type="match status" value="1"/>
</dbReference>
<dbReference type="Pfam" id="PF14572">
    <property type="entry name" value="Pribosyl_synth"/>
    <property type="match status" value="1"/>
</dbReference>
<dbReference type="Pfam" id="PF13793">
    <property type="entry name" value="Pribosyltran_N"/>
    <property type="match status" value="1"/>
</dbReference>
<dbReference type="SMART" id="SM01400">
    <property type="entry name" value="Pribosyltran_N"/>
    <property type="match status" value="1"/>
</dbReference>
<dbReference type="SUPFAM" id="SSF53271">
    <property type="entry name" value="PRTase-like"/>
    <property type="match status" value="2"/>
</dbReference>
<dbReference type="PROSITE" id="PS00114">
    <property type="entry name" value="PRPP_SYNTHASE"/>
    <property type="match status" value="1"/>
</dbReference>
<evidence type="ECO:0000250" key="1"/>
<evidence type="ECO:0000255" key="2"/>
<evidence type="ECO:0000269" key="3">
    <source>
    </source>
</evidence>
<evidence type="ECO:0000305" key="4"/>
<accession>P41831</accession>
<keyword id="KW-0067">ATP-binding</keyword>
<keyword id="KW-0963">Cytoplasm</keyword>
<keyword id="KW-0418">Kinase</keyword>
<keyword id="KW-0460">Magnesium</keyword>
<keyword id="KW-0479">Metal-binding</keyword>
<keyword id="KW-0545">Nucleotide biosynthesis</keyword>
<keyword id="KW-0547">Nucleotide-binding</keyword>
<keyword id="KW-0597">Phosphoprotein</keyword>
<keyword id="KW-1185">Reference proteome</keyword>
<keyword id="KW-0808">Transferase</keyword>
<gene>
    <name type="ORF">SPAC4A8.14</name>
</gene>